<gene>
    <name type="primary">Rps6kb1</name>
</gene>
<accession>Q8BSK8</accession>
<accession>Q5SWG1</accession>
<accession>Q8CHX0</accession>
<protein>
    <recommendedName>
        <fullName>Ribosomal protein S6 kinase beta-1</fullName>
        <shortName>S6K-beta-1</shortName>
        <shortName>S6K1</shortName>
        <ecNumber evidence="9 12">2.7.11.1</ecNumber>
    </recommendedName>
    <alternativeName>
        <fullName>70 kDa ribosomal protein S6 kinase 1</fullName>
        <shortName>P70S6K1</shortName>
        <shortName>p70-S6K 1</shortName>
    </alternativeName>
    <alternativeName>
        <fullName>Ribosomal protein S6 kinase I</fullName>
        <shortName>S6K</shortName>
    </alternativeName>
    <alternativeName>
        <fullName>p70 ribosomal S6 kinase alpha</fullName>
        <shortName>p70 S6 kinase alpha</shortName>
        <shortName>p70 S6K-alpha</shortName>
        <shortName>p70 S6KA</shortName>
    </alternativeName>
</protein>
<comment type="function">
    <text evidence="2 3 8 9 10 11 12 13">Serine/threonine-protein kinase that acts downstream of mTOR signaling in response to growth factors and nutrients to promote cell proliferation, cell growth and cell cycle progression (PubMed:11493700, PubMed:11500364, PubMed:15060135, PubMed:24161930). Regulates protein synthesis through phosphorylation of EIF4B, RPS6 and EEF2K, and contributes to cell survival by repressing the pro-apoptotic function of BAD (PubMed:11493700, PubMed:11500364). Under conditions of nutrient depletion, the inactive form associates with the EIF3 translation initiation complex (By similarity). Upon mitogenic stimulation, phosphorylation by the mechanistic target of rapamycin complex 1 (mTORC1) leads to dissociation from the EIF3 complex and activation (By similarity). The active form then phosphorylates and activates several substrates in the pre-initiation complex, including the EIF2B complex and the cap-binding complex component EIF4B (By similarity). Also controls translation initiation by phosphorylating a negative regulator of EIF4A, PDCD4, targeting it for ubiquitination and subsequent proteolysis (By similarity). Promotes initiation of the pioneer round of protein synthesis by phosphorylating POLDIP3/SKAR (By similarity). In response to IGF1, activates translation elongation by phosphorylating EEF2 kinase (EEF2K), which leads to its inhibition and thus activation of EEF2 (PubMed:11500364). Also plays a role in feedback regulation of mTORC2 by mTORC1 by phosphorylating MAPKAP1/SIN1, MTOR and RICTOR, resulting in the inhibition of mTORC2 and AKT1 signaling (PubMed:24161930). Also involved in feedback regulation of mTORC1 and mTORC2 by phosphorylating DEPTOR (By similarity). Mediates cell survival by phosphorylating the pro-apoptotic protein BAD and suppressing its pro-apoptotic function (PubMed:11493700). Phosphorylates mitochondrial URI1 leading to dissociation of a URI1-PPP1CC complex (By similarity). The free mitochondrial PPP1CC can then dephosphorylate RPS6KB1 at Thr-412, which is proposed to be a negative feedback mechanism for the RPS6KB1 anti-apoptotic function (By similarity). Mediates TNF-alpha-induced insulin resistance by phosphorylating IRS1 at multiple serine residues, resulting in accelerated degradation of IRS1 (PubMed:18952604). In cells lacking functional TSC1-2 complex, constitutively phosphorylates and inhibits GSK3B (By similarity). May be involved in cytoskeletal rearrangement through binding to neurabin (By similarity). Phosphorylates and activates the pyrimidine biosynthesis enzyme CAD, downstream of MTOR (By similarity). Following activation by mTORC1, phosphorylates EPRS and thereby plays a key role in fatty acid uptake by adipocytes and also most probably in interferon-gamma-induced translation inhibition (PubMed:28178239).</text>
</comment>
<comment type="catalytic activity">
    <reaction evidence="9">
        <text>L-seryl-[protein] + ATP = O-phospho-L-seryl-[protein] + ADP + H(+)</text>
        <dbReference type="Rhea" id="RHEA:17989"/>
        <dbReference type="Rhea" id="RHEA-COMP:9863"/>
        <dbReference type="Rhea" id="RHEA-COMP:11604"/>
        <dbReference type="ChEBI" id="CHEBI:15378"/>
        <dbReference type="ChEBI" id="CHEBI:29999"/>
        <dbReference type="ChEBI" id="CHEBI:30616"/>
        <dbReference type="ChEBI" id="CHEBI:83421"/>
        <dbReference type="ChEBI" id="CHEBI:456216"/>
        <dbReference type="EC" id="2.7.11.1"/>
    </reaction>
</comment>
<comment type="catalytic activity">
    <reaction evidence="9 12">
        <text>L-threonyl-[protein] + ATP = O-phospho-L-threonyl-[protein] + ADP + H(+)</text>
        <dbReference type="Rhea" id="RHEA:46608"/>
        <dbReference type="Rhea" id="RHEA-COMP:11060"/>
        <dbReference type="Rhea" id="RHEA-COMP:11605"/>
        <dbReference type="ChEBI" id="CHEBI:15378"/>
        <dbReference type="ChEBI" id="CHEBI:30013"/>
        <dbReference type="ChEBI" id="CHEBI:30616"/>
        <dbReference type="ChEBI" id="CHEBI:61977"/>
        <dbReference type="ChEBI" id="CHEBI:456216"/>
        <dbReference type="EC" id="2.7.11.1"/>
    </reaction>
</comment>
<comment type="activity regulation">
    <text evidence="1">Activation requires multiple phosphorylation events on serine/threonine residues. Activation appears to be first mediated by phosphorylation of multiple sites in the autoinhibitory domain, which facilitates phosphorylation at Thr-412, disrupting the autoinhibitory mechanism and allowing phosphorylation of Thr-252 by PDPK1. The active conformation of the kinase is believed to be stabilized by a mechanism involving three conserved phosphorylation sites located in the kinase domain activation loop (Thr-252) and in the AGC-kinase C-terminal domain (Ser-394 in the middle of the tail/linker region and Thr-412 within a hydrophobic motif at its end). Activated by mTORC1; isoform Alpha I and isoform Alpha II are sensitive to rapamycin, which inhibits activating phosphorylation at Thr-412. Activated by PDPK1 (By similarity).</text>
</comment>
<comment type="subunit">
    <text evidence="2 3">Interacts with PPP1R9A/neurabin-1. Interacts with RPTOR. Interacts with IRS1. Interacts with EIF3B and EIF3C. Interacts with TRAF4. Interacts with POLDIP3. Interacts (via N-terminus) with IER5.</text>
</comment>
<comment type="interaction">
    <interactant intactId="EBI-646423">
        <id>Q8BSK8</id>
    </interactant>
    <interactant intactId="EBI-641788">
        <id>P23804</id>
        <label>Mdm2</label>
    </interactant>
    <organismsDiffer>false</organismsDiffer>
    <experiments>2</experiments>
</comment>
<comment type="subcellular location">
    <subcellularLocation>
        <location evidence="1">Cytoplasm</location>
    </subcellularLocation>
    <subcellularLocation>
        <location evidence="1">Synapse</location>
        <location evidence="1">Synaptosome</location>
    </subcellularLocation>
    <subcellularLocation>
        <location evidence="8">Mitochondrion outer membrane</location>
    </subcellularLocation>
    <subcellularLocation>
        <location evidence="1">Mitochondrion</location>
    </subcellularLocation>
    <text evidence="1">Colocalizes with URI1 at mitochondrion.</text>
</comment>
<comment type="alternative products">
    <event type="alternative initiation"/>
    <isoform>
        <id>Q8BSK8-1</id>
        <name>Alpha I</name>
        <sequence type="displayed"/>
    </isoform>
    <isoform>
        <id>Q8BSK8-2</id>
        <name>Alpha II</name>
        <sequence type="described" ref="VSP_018840"/>
    </isoform>
</comment>
<comment type="domain">
    <text evidence="1">The autoinhibitory domain is believed to block phosphorylation within the AGC-kinase C-terminal domain and the activation loop.</text>
</comment>
<comment type="domain">
    <text evidence="1">The TOS (TOR signaling) motif is essential for activation by mTORC1.</text>
</comment>
<comment type="PTM">
    <text evidence="1">Phosphorylation at Thr-412 is regulated by mTORC1. The phosphorylation at this site is maintained by an agonist-dependent autophosphorylation mechanism. Activated by phosphorylation at Thr-252 by PDPK1. Dephosphorylation by PPP1CC at Thr-412 in mitochondrion (By similarity).</text>
</comment>
<comment type="disruption phenotype">
    <text evidence="10">Impairment of body growth. Lethal in combination with Rps6kb2 deficiency.</text>
</comment>
<comment type="similarity">
    <text evidence="14">Belongs to the protein kinase superfamily. AGC Ser/Thr protein kinase family. S6 kinase subfamily.</text>
</comment>
<sequence length="525" mass="59146">MRRRRRRDGFYLAPDFRHREAEDMAGVFDIDLDQPEDAGSEDELEEGGQLNESMDHGGVGPYELGMEHCEKFEISETSVNRGPEKIRPECFELLRVLGKGGYGKVFQVRKVTGANTGKIFAMKVLKKAMIVRNAKDTAHTKAERNILEEVKHPFIVDLIYAFQTGGKLYLILEYLSGGELFMQLEREGIFMEDTACFYLAEISMALGHLHQKGIIYRDLKPENIMLNHQGHVKLTDFGLCKESIHDGTVTHTFCGTIEYMAPEILMRSGHNRAVDWWSLGALMYDMLTGAPPFTGENRKKTIDKILKCKLNLPPYLTQEARDLLKKLLKRNAASRLGAGPGDAGEVQAHPFFRHINWEELLARKVEPPFKPLLQSEEDVSQFDSKFTRQTPVDSPDDSTLSESANQVFLGFTYVAPSVLESVKEKFSFEPKIRSPRRFIGSPRTPVSPVKFSPGDFWGRGASASTANPQTPVEYPMETSGIEQMDVTVSGEASAPLPIRQPNSGPYKKQAFPMISKRPEHLRMNL</sequence>
<keyword id="KW-0007">Acetylation</keyword>
<keyword id="KW-0024">Alternative initiation</keyword>
<keyword id="KW-0053">Apoptosis</keyword>
<keyword id="KW-0067">ATP-binding</keyword>
<keyword id="KW-0131">Cell cycle</keyword>
<keyword id="KW-0963">Cytoplasm</keyword>
<keyword id="KW-0418">Kinase</keyword>
<keyword id="KW-0472">Membrane</keyword>
<keyword id="KW-0496">Mitochondrion</keyword>
<keyword id="KW-1000">Mitochondrion outer membrane</keyword>
<keyword id="KW-0547">Nucleotide-binding</keyword>
<keyword id="KW-0597">Phosphoprotein</keyword>
<keyword id="KW-1185">Reference proteome</keyword>
<keyword id="KW-0723">Serine/threonine-protein kinase</keyword>
<keyword id="KW-0770">Synapse</keyword>
<keyword id="KW-0771">Synaptosome</keyword>
<keyword id="KW-0808">Transferase</keyword>
<keyword id="KW-0810">Translation regulation</keyword>
<name>KS6B1_MOUSE</name>
<reference key="1">
    <citation type="journal article" date="2005" name="Science">
        <title>The transcriptional landscape of the mammalian genome.</title>
        <authorList>
            <person name="Carninci P."/>
            <person name="Kasukawa T."/>
            <person name="Katayama S."/>
            <person name="Gough J."/>
            <person name="Frith M.C."/>
            <person name="Maeda N."/>
            <person name="Oyama R."/>
            <person name="Ravasi T."/>
            <person name="Lenhard B."/>
            <person name="Wells C."/>
            <person name="Kodzius R."/>
            <person name="Shimokawa K."/>
            <person name="Bajic V.B."/>
            <person name="Brenner S.E."/>
            <person name="Batalov S."/>
            <person name="Forrest A.R."/>
            <person name="Zavolan M."/>
            <person name="Davis M.J."/>
            <person name="Wilming L.G."/>
            <person name="Aidinis V."/>
            <person name="Allen J.E."/>
            <person name="Ambesi-Impiombato A."/>
            <person name="Apweiler R."/>
            <person name="Aturaliya R.N."/>
            <person name="Bailey T.L."/>
            <person name="Bansal M."/>
            <person name="Baxter L."/>
            <person name="Beisel K.W."/>
            <person name="Bersano T."/>
            <person name="Bono H."/>
            <person name="Chalk A.M."/>
            <person name="Chiu K.P."/>
            <person name="Choudhary V."/>
            <person name="Christoffels A."/>
            <person name="Clutterbuck D.R."/>
            <person name="Crowe M.L."/>
            <person name="Dalla E."/>
            <person name="Dalrymple B.P."/>
            <person name="de Bono B."/>
            <person name="Della Gatta G."/>
            <person name="di Bernardo D."/>
            <person name="Down T."/>
            <person name="Engstrom P."/>
            <person name="Fagiolini M."/>
            <person name="Faulkner G."/>
            <person name="Fletcher C.F."/>
            <person name="Fukushima T."/>
            <person name="Furuno M."/>
            <person name="Futaki S."/>
            <person name="Gariboldi M."/>
            <person name="Georgii-Hemming P."/>
            <person name="Gingeras T.R."/>
            <person name="Gojobori T."/>
            <person name="Green R.E."/>
            <person name="Gustincich S."/>
            <person name="Harbers M."/>
            <person name="Hayashi Y."/>
            <person name="Hensch T.K."/>
            <person name="Hirokawa N."/>
            <person name="Hill D."/>
            <person name="Huminiecki L."/>
            <person name="Iacono M."/>
            <person name="Ikeo K."/>
            <person name="Iwama A."/>
            <person name="Ishikawa T."/>
            <person name="Jakt M."/>
            <person name="Kanapin A."/>
            <person name="Katoh M."/>
            <person name="Kawasawa Y."/>
            <person name="Kelso J."/>
            <person name="Kitamura H."/>
            <person name="Kitano H."/>
            <person name="Kollias G."/>
            <person name="Krishnan S.P."/>
            <person name="Kruger A."/>
            <person name="Kummerfeld S.K."/>
            <person name="Kurochkin I.V."/>
            <person name="Lareau L.F."/>
            <person name="Lazarevic D."/>
            <person name="Lipovich L."/>
            <person name="Liu J."/>
            <person name="Liuni S."/>
            <person name="McWilliam S."/>
            <person name="Madan Babu M."/>
            <person name="Madera M."/>
            <person name="Marchionni L."/>
            <person name="Matsuda H."/>
            <person name="Matsuzawa S."/>
            <person name="Miki H."/>
            <person name="Mignone F."/>
            <person name="Miyake S."/>
            <person name="Morris K."/>
            <person name="Mottagui-Tabar S."/>
            <person name="Mulder N."/>
            <person name="Nakano N."/>
            <person name="Nakauchi H."/>
            <person name="Ng P."/>
            <person name="Nilsson R."/>
            <person name="Nishiguchi S."/>
            <person name="Nishikawa S."/>
            <person name="Nori F."/>
            <person name="Ohara O."/>
            <person name="Okazaki Y."/>
            <person name="Orlando V."/>
            <person name="Pang K.C."/>
            <person name="Pavan W.J."/>
            <person name="Pavesi G."/>
            <person name="Pesole G."/>
            <person name="Petrovsky N."/>
            <person name="Piazza S."/>
            <person name="Reed J."/>
            <person name="Reid J.F."/>
            <person name="Ring B.Z."/>
            <person name="Ringwald M."/>
            <person name="Rost B."/>
            <person name="Ruan Y."/>
            <person name="Salzberg S.L."/>
            <person name="Sandelin A."/>
            <person name="Schneider C."/>
            <person name="Schoenbach C."/>
            <person name="Sekiguchi K."/>
            <person name="Semple C.A."/>
            <person name="Seno S."/>
            <person name="Sessa L."/>
            <person name="Sheng Y."/>
            <person name="Shibata Y."/>
            <person name="Shimada H."/>
            <person name="Shimada K."/>
            <person name="Silva D."/>
            <person name="Sinclair B."/>
            <person name="Sperling S."/>
            <person name="Stupka E."/>
            <person name="Sugiura K."/>
            <person name="Sultana R."/>
            <person name="Takenaka Y."/>
            <person name="Taki K."/>
            <person name="Tammoja K."/>
            <person name="Tan S.L."/>
            <person name="Tang S."/>
            <person name="Taylor M.S."/>
            <person name="Tegner J."/>
            <person name="Teichmann S.A."/>
            <person name="Ueda H.R."/>
            <person name="van Nimwegen E."/>
            <person name="Verardo R."/>
            <person name="Wei C.L."/>
            <person name="Yagi K."/>
            <person name="Yamanishi H."/>
            <person name="Zabarovsky E."/>
            <person name="Zhu S."/>
            <person name="Zimmer A."/>
            <person name="Hide W."/>
            <person name="Bult C."/>
            <person name="Grimmond S.M."/>
            <person name="Teasdale R.D."/>
            <person name="Liu E.T."/>
            <person name="Brusic V."/>
            <person name="Quackenbush J."/>
            <person name="Wahlestedt C."/>
            <person name="Mattick J.S."/>
            <person name="Hume D.A."/>
            <person name="Kai C."/>
            <person name="Sasaki D."/>
            <person name="Tomaru Y."/>
            <person name="Fukuda S."/>
            <person name="Kanamori-Katayama M."/>
            <person name="Suzuki M."/>
            <person name="Aoki J."/>
            <person name="Arakawa T."/>
            <person name="Iida J."/>
            <person name="Imamura K."/>
            <person name="Itoh M."/>
            <person name="Kato T."/>
            <person name="Kawaji H."/>
            <person name="Kawagashira N."/>
            <person name="Kawashima T."/>
            <person name="Kojima M."/>
            <person name="Kondo S."/>
            <person name="Konno H."/>
            <person name="Nakano K."/>
            <person name="Ninomiya N."/>
            <person name="Nishio T."/>
            <person name="Okada M."/>
            <person name="Plessy C."/>
            <person name="Shibata K."/>
            <person name="Shiraki T."/>
            <person name="Suzuki S."/>
            <person name="Tagami M."/>
            <person name="Waki K."/>
            <person name="Watahiki A."/>
            <person name="Okamura-Oho Y."/>
            <person name="Suzuki H."/>
            <person name="Kawai J."/>
            <person name="Hayashizaki Y."/>
        </authorList>
    </citation>
    <scope>NUCLEOTIDE SEQUENCE [LARGE SCALE MRNA]</scope>
    <source>
        <strain>C57BL/6J</strain>
    </source>
</reference>
<reference key="2">
    <citation type="journal article" date="2009" name="PLoS Biol.">
        <title>Lineage-specific biology revealed by a finished genome assembly of the mouse.</title>
        <authorList>
            <person name="Church D.M."/>
            <person name="Goodstadt L."/>
            <person name="Hillier L.W."/>
            <person name="Zody M.C."/>
            <person name="Goldstein S."/>
            <person name="She X."/>
            <person name="Bult C.J."/>
            <person name="Agarwala R."/>
            <person name="Cherry J.L."/>
            <person name="DiCuccio M."/>
            <person name="Hlavina W."/>
            <person name="Kapustin Y."/>
            <person name="Meric P."/>
            <person name="Maglott D."/>
            <person name="Birtle Z."/>
            <person name="Marques A.C."/>
            <person name="Graves T."/>
            <person name="Zhou S."/>
            <person name="Teague B."/>
            <person name="Potamousis K."/>
            <person name="Churas C."/>
            <person name="Place M."/>
            <person name="Herschleb J."/>
            <person name="Runnheim R."/>
            <person name="Forrest D."/>
            <person name="Amos-Landgraf J."/>
            <person name="Schwartz D.C."/>
            <person name="Cheng Z."/>
            <person name="Lindblad-Toh K."/>
            <person name="Eichler E.E."/>
            <person name="Ponting C.P."/>
        </authorList>
    </citation>
    <scope>NUCLEOTIDE SEQUENCE [LARGE SCALE GENOMIC DNA]</scope>
    <source>
        <strain>C57BL/6J</strain>
    </source>
</reference>
<reference key="3">
    <citation type="submission" date="2005-07" db="EMBL/GenBank/DDBJ databases">
        <authorList>
            <person name="Mural R.J."/>
            <person name="Adams M.D."/>
            <person name="Myers E.W."/>
            <person name="Smith H.O."/>
            <person name="Venter J.C."/>
        </authorList>
    </citation>
    <scope>NUCLEOTIDE SEQUENCE [LARGE SCALE GENOMIC DNA]</scope>
</reference>
<reference key="4">
    <citation type="journal article" date="2004" name="Genome Res.">
        <title>The status, quality, and expansion of the NIH full-length cDNA project: the Mammalian Gene Collection (MGC).</title>
        <authorList>
            <consortium name="The MGC Project Team"/>
        </authorList>
    </citation>
    <scope>NUCLEOTIDE SEQUENCE [LARGE SCALE MRNA]</scope>
    <source>
        <strain>Czech II</strain>
        <tissue>Mammary tumor</tissue>
    </source>
</reference>
<reference key="5">
    <citation type="journal article" date="2001" name="EMBO J.">
        <title>Regulation of elongation factor 2 kinase by p90(RSK1) and p70 S6 kinase.</title>
        <authorList>
            <person name="Wang X."/>
            <person name="Li W."/>
            <person name="Williams M."/>
            <person name="Terada N."/>
            <person name="Alessi D.R."/>
            <person name="Proud C.G."/>
        </authorList>
    </citation>
    <scope>FUNCTION IN PHOSPHORYLATION OF EEF2K</scope>
    <scope>CATALYTIC ACTIVITY</scope>
</reference>
<reference key="6">
    <citation type="journal article" date="2001" name="Proc. Natl. Acad. Sci. U.S.A.">
        <title>p70S6 kinase signals cell survival as well as growth, inactivating the pro-apoptotic molecule BAD.</title>
        <authorList>
            <person name="Harada H."/>
            <person name="Andersen J.S."/>
            <person name="Mann M."/>
            <person name="Terada N."/>
            <person name="Korsmeyer S.J."/>
        </authorList>
    </citation>
    <scope>FUNCTION IN PHOSPHORYLATION OF BAD</scope>
    <scope>FUNCTION IN APOPTOSIS REGULATION</scope>
    <scope>SUBCELLULAR LOCATION</scope>
</reference>
<reference key="7">
    <citation type="journal article" date="2004" name="Mol. Cell. Biol.">
        <title>S6K1(-/-)/S6K2(-/-) mice exhibit perinatal lethality and rapamycin-sensitive 5'-terminal oligopyrimidine mRNA translation and reveal a mitogen-activated protein kinase-dependent S6 kinase pathway.</title>
        <authorList>
            <person name="Pende M."/>
            <person name="Um S.H."/>
            <person name="Mieulet V."/>
            <person name="Sticker M."/>
            <person name="Goss V.L."/>
            <person name="Mestan J."/>
            <person name="Mueller M."/>
            <person name="Fumagalli S."/>
            <person name="Kozma S.C."/>
            <person name="Thomas G."/>
        </authorList>
    </citation>
    <scope>FUNCTION</scope>
    <scope>DISRUPTION PHENOTYPE</scope>
</reference>
<reference key="8">
    <citation type="journal article" date="2008" name="J. Biol. Chem.">
        <title>S6K directly phosphorylates IRS-1 on Ser-270 to promote insulin resistance in response to TNF-(alpha) signaling through IKK2.</title>
        <authorList>
            <person name="Zhang J."/>
            <person name="Gao Z."/>
            <person name="Yin J."/>
            <person name="Quon M.J."/>
            <person name="Ye J."/>
        </authorList>
    </citation>
    <scope>FUNCTION IN PHOSPHORYLATION OF IRS1</scope>
</reference>
<reference key="9">
    <citation type="journal article" date="2010" name="Cell">
        <title>A tissue-specific atlas of mouse protein phosphorylation and expression.</title>
        <authorList>
            <person name="Huttlin E.L."/>
            <person name="Jedrychowski M.P."/>
            <person name="Elias J.E."/>
            <person name="Goswami T."/>
            <person name="Rad R."/>
            <person name="Beausoleil S.A."/>
            <person name="Villen J."/>
            <person name="Haas W."/>
            <person name="Sowa M.E."/>
            <person name="Gygi S.P."/>
        </authorList>
    </citation>
    <scope>PHOSPHORYLATION [LARGE SCALE ANALYSIS] AT SER-447 AND SER-452</scope>
    <scope>IDENTIFICATION BY MASS SPECTROMETRY [LARGE SCALE ANALYSIS]</scope>
    <source>
        <tissue>Brown adipose tissue</tissue>
        <tissue>Heart</tissue>
        <tissue>Lung</tissue>
        <tissue>Pancreas</tissue>
        <tissue>Spleen</tissue>
        <tissue>Testis</tissue>
    </source>
</reference>
<reference key="10">
    <citation type="journal article" date="2013" name="Nat. Cell Biol.">
        <title>Sin1 phosphorylation impairs mTORC2 complex integrity and inhibits downstream Akt signalling to suppress tumorigenesis.</title>
        <authorList>
            <person name="Liu P."/>
            <person name="Gan W."/>
            <person name="Inuzuka H."/>
            <person name="Lazorchak A.S."/>
            <person name="Gao D."/>
            <person name="Arojo O."/>
            <person name="Liu D."/>
            <person name="Wan L."/>
            <person name="Zhai B."/>
            <person name="Yu Y."/>
            <person name="Yuan M."/>
            <person name="Kim B.M."/>
            <person name="Shaik S."/>
            <person name="Menon S."/>
            <person name="Gygi S.P."/>
            <person name="Lee T.H."/>
            <person name="Asara J.M."/>
            <person name="Manning B.D."/>
            <person name="Blenis J."/>
            <person name="Su B."/>
            <person name="Wei W."/>
        </authorList>
    </citation>
    <scope>FUNCTION</scope>
    <scope>CATALYTIC ACTIVITY</scope>
</reference>
<reference key="11">
    <citation type="journal article" date="2017" name="Nature">
        <title>EPRS is a critical mTORC1-S6K1 effector that influences adiposity in mice.</title>
        <authorList>
            <person name="Arif A."/>
            <person name="Terenzi F."/>
            <person name="Potdar A.A."/>
            <person name="Jia J."/>
            <person name="Sacks J."/>
            <person name="China A."/>
            <person name="Halawani D."/>
            <person name="Vasu K."/>
            <person name="Li X."/>
            <person name="Brown J.M."/>
            <person name="Chen J."/>
            <person name="Kozma S.C."/>
            <person name="Thomas G."/>
            <person name="Fox P.L."/>
        </authorList>
    </citation>
    <scope>FUNCTION IN PHOSPHORYLATION OF EPRS</scope>
</reference>
<organism>
    <name type="scientific">Mus musculus</name>
    <name type="common">Mouse</name>
    <dbReference type="NCBI Taxonomy" id="10090"/>
    <lineage>
        <taxon>Eukaryota</taxon>
        <taxon>Metazoa</taxon>
        <taxon>Chordata</taxon>
        <taxon>Craniata</taxon>
        <taxon>Vertebrata</taxon>
        <taxon>Euteleostomi</taxon>
        <taxon>Mammalia</taxon>
        <taxon>Eutheria</taxon>
        <taxon>Euarchontoglires</taxon>
        <taxon>Glires</taxon>
        <taxon>Rodentia</taxon>
        <taxon>Myomorpha</taxon>
        <taxon>Muroidea</taxon>
        <taxon>Muridae</taxon>
        <taxon>Murinae</taxon>
        <taxon>Mus</taxon>
        <taxon>Mus</taxon>
    </lineage>
</organism>
<dbReference type="EC" id="2.7.11.1" evidence="9 12"/>
<dbReference type="EMBL" id="AK032724">
    <property type="protein sequence ID" value="BAC28000.1"/>
    <property type="molecule type" value="mRNA"/>
</dbReference>
<dbReference type="EMBL" id="AL604063">
    <property type="status" value="NOT_ANNOTATED_CDS"/>
    <property type="molecule type" value="Genomic_DNA"/>
</dbReference>
<dbReference type="EMBL" id="CH466556">
    <property type="protein sequence ID" value="EDL15788.1"/>
    <property type="molecule type" value="Genomic_DNA"/>
</dbReference>
<dbReference type="EMBL" id="BC038491">
    <property type="protein sequence ID" value="AAH38491.1"/>
    <property type="molecule type" value="mRNA"/>
</dbReference>
<dbReference type="CCDS" id="CCDS48875.1">
    <molecule id="Q8BSK8-1"/>
</dbReference>
<dbReference type="RefSeq" id="NP_001107806.1">
    <molecule id="Q8BSK8-1"/>
    <property type="nucleotide sequence ID" value="NM_001114334.2"/>
</dbReference>
<dbReference type="SMR" id="Q8BSK8"/>
<dbReference type="BioGRID" id="215408">
    <property type="interactions" value="11"/>
</dbReference>
<dbReference type="FunCoup" id="Q8BSK8">
    <property type="interactions" value="4340"/>
</dbReference>
<dbReference type="IntAct" id="Q8BSK8">
    <property type="interactions" value="6"/>
</dbReference>
<dbReference type="MINT" id="Q8BSK8"/>
<dbReference type="STRING" id="10090.ENSMUSP00000119715"/>
<dbReference type="ChEMBL" id="CHEMBL5429"/>
<dbReference type="GlyGen" id="Q8BSK8">
    <property type="glycosylation" value="2 sites, 1 O-linked glycan (2 sites)"/>
</dbReference>
<dbReference type="iPTMnet" id="Q8BSK8"/>
<dbReference type="PhosphoSitePlus" id="Q8BSK8"/>
<dbReference type="PaxDb" id="10090-ENSMUSP00000119715"/>
<dbReference type="ProteomicsDB" id="264878">
    <molecule id="Q8BSK8-1"/>
</dbReference>
<dbReference type="ProteomicsDB" id="264879">
    <molecule id="Q8BSK8-2"/>
</dbReference>
<dbReference type="Pumba" id="Q8BSK8"/>
<dbReference type="Antibodypedia" id="3544">
    <property type="antibodies" value="2687 antibodies from 53 providers"/>
</dbReference>
<dbReference type="DNASU" id="72508"/>
<dbReference type="Ensembl" id="ENSMUST00000154617.8">
    <molecule id="Q8BSK8-1"/>
    <property type="protein sequence ID" value="ENSMUSP00000119715.2"/>
    <property type="gene ID" value="ENSMUSG00000020516.16"/>
</dbReference>
<dbReference type="GeneID" id="72508"/>
<dbReference type="KEGG" id="mmu:72508"/>
<dbReference type="UCSC" id="uc007ksn.2">
    <molecule id="Q8BSK8-1"/>
    <property type="organism name" value="mouse"/>
</dbReference>
<dbReference type="AGR" id="MGI:1270849"/>
<dbReference type="CTD" id="6198"/>
<dbReference type="MGI" id="MGI:1270849">
    <property type="gene designation" value="Rps6kb1"/>
</dbReference>
<dbReference type="VEuPathDB" id="HostDB:ENSMUSG00000020516"/>
<dbReference type="eggNOG" id="KOG0598">
    <property type="taxonomic scope" value="Eukaryota"/>
</dbReference>
<dbReference type="GeneTree" id="ENSGT00940000154203"/>
<dbReference type="HOGENOM" id="CLU_000288_63_5_1"/>
<dbReference type="InParanoid" id="Q8BSK8"/>
<dbReference type="OMA" id="KGSIFAM"/>
<dbReference type="OrthoDB" id="63267at2759"/>
<dbReference type="PhylomeDB" id="Q8BSK8"/>
<dbReference type="TreeFam" id="TF313438"/>
<dbReference type="Reactome" id="R-MMU-166208">
    <property type="pathway name" value="mTORC1-mediated signalling"/>
</dbReference>
<dbReference type="BioGRID-ORCS" id="72508">
    <property type="hits" value="5 hits in 81 CRISPR screens"/>
</dbReference>
<dbReference type="ChiTaRS" id="Rps6kb1">
    <property type="organism name" value="mouse"/>
</dbReference>
<dbReference type="PRO" id="PR:Q8BSK8"/>
<dbReference type="Proteomes" id="UP000000589">
    <property type="component" value="Chromosome 11"/>
</dbReference>
<dbReference type="RNAct" id="Q8BSK8">
    <property type="molecule type" value="protein"/>
</dbReference>
<dbReference type="Bgee" id="ENSMUSG00000020516">
    <property type="expression patterns" value="Expressed in lacrimal gland and 269 other cell types or tissues"/>
</dbReference>
<dbReference type="ExpressionAtlas" id="Q8BSK8">
    <property type="expression patterns" value="baseline and differential"/>
</dbReference>
<dbReference type="GO" id="GO:0098978">
    <property type="term" value="C:glutamatergic synapse"/>
    <property type="evidence" value="ECO:0000314"/>
    <property type="project" value="SynGO"/>
</dbReference>
<dbReference type="GO" id="GO:0005741">
    <property type="term" value="C:mitochondrial outer membrane"/>
    <property type="evidence" value="ECO:0007669"/>
    <property type="project" value="UniProtKB-SubCell"/>
</dbReference>
<dbReference type="GO" id="GO:0005739">
    <property type="term" value="C:mitochondrion"/>
    <property type="evidence" value="ECO:0000314"/>
    <property type="project" value="UniProtKB"/>
</dbReference>
<dbReference type="GO" id="GO:0043005">
    <property type="term" value="C:neuron projection"/>
    <property type="evidence" value="ECO:0007669"/>
    <property type="project" value="UniProtKB-KW"/>
</dbReference>
<dbReference type="GO" id="GO:0005654">
    <property type="term" value="C:nucleoplasm"/>
    <property type="evidence" value="ECO:0007669"/>
    <property type="project" value="Ensembl"/>
</dbReference>
<dbReference type="GO" id="GO:0005524">
    <property type="term" value="F:ATP binding"/>
    <property type="evidence" value="ECO:0007669"/>
    <property type="project" value="UniProtKB-KW"/>
</dbReference>
<dbReference type="GO" id="GO:0004672">
    <property type="term" value="F:protein kinase activity"/>
    <property type="evidence" value="ECO:0000314"/>
    <property type="project" value="MGI"/>
</dbReference>
<dbReference type="GO" id="GO:0106310">
    <property type="term" value="F:protein serine kinase activity"/>
    <property type="evidence" value="ECO:0007669"/>
    <property type="project" value="RHEA"/>
</dbReference>
<dbReference type="GO" id="GO:0004674">
    <property type="term" value="F:protein serine/threonine kinase activity"/>
    <property type="evidence" value="ECO:0007669"/>
    <property type="project" value="UniProtKB-KW"/>
</dbReference>
<dbReference type="GO" id="GO:0004712">
    <property type="term" value="F:protein serine/threonine/tyrosine kinase activity"/>
    <property type="evidence" value="ECO:0000314"/>
    <property type="project" value="UniProtKB"/>
</dbReference>
<dbReference type="GO" id="GO:0006915">
    <property type="term" value="P:apoptotic process"/>
    <property type="evidence" value="ECO:0007669"/>
    <property type="project" value="UniProtKB-KW"/>
</dbReference>
<dbReference type="GO" id="GO:0001662">
    <property type="term" value="P:behavioral fear response"/>
    <property type="evidence" value="ECO:0000316"/>
    <property type="project" value="MGI"/>
</dbReference>
<dbReference type="GO" id="GO:0071549">
    <property type="term" value="P:cellular response to dexamethasone stimulus"/>
    <property type="evidence" value="ECO:0000314"/>
    <property type="project" value="MGI"/>
</dbReference>
<dbReference type="GO" id="GO:0071363">
    <property type="term" value="P:cellular response to growth factor stimulus"/>
    <property type="evidence" value="ECO:0000250"/>
    <property type="project" value="UniProtKB"/>
</dbReference>
<dbReference type="GO" id="GO:0032869">
    <property type="term" value="P:cellular response to insulin stimulus"/>
    <property type="evidence" value="ECO:0000316"/>
    <property type="project" value="MGI"/>
</dbReference>
<dbReference type="GO" id="GO:0031670">
    <property type="term" value="P:cellular response to nutrient"/>
    <property type="evidence" value="ECO:0007669"/>
    <property type="project" value="Ensembl"/>
</dbReference>
<dbReference type="GO" id="GO:0071346">
    <property type="term" value="P:cellular response to type II interferon"/>
    <property type="evidence" value="ECO:0000315"/>
    <property type="project" value="UniProtKB"/>
</dbReference>
<dbReference type="GO" id="GO:0000082">
    <property type="term" value="P:G1/S transition of mitotic cell cycle"/>
    <property type="evidence" value="ECO:0007669"/>
    <property type="project" value="Ensembl"/>
</dbReference>
<dbReference type="GO" id="GO:0007281">
    <property type="term" value="P:germ cell development"/>
    <property type="evidence" value="ECO:0000314"/>
    <property type="project" value="MGI"/>
</dbReference>
<dbReference type="GO" id="GO:0044539">
    <property type="term" value="P:long-chain fatty acid import into cell"/>
    <property type="evidence" value="ECO:0000315"/>
    <property type="project" value="UniProtKB"/>
</dbReference>
<dbReference type="GO" id="GO:0050804">
    <property type="term" value="P:modulation of chemical synaptic transmission"/>
    <property type="evidence" value="ECO:0000314"/>
    <property type="project" value="SynGO"/>
</dbReference>
<dbReference type="GO" id="GO:0043066">
    <property type="term" value="P:negative regulation of apoptotic process"/>
    <property type="evidence" value="ECO:0000315"/>
    <property type="project" value="UniProtKB"/>
</dbReference>
<dbReference type="GO" id="GO:2001237">
    <property type="term" value="P:negative regulation of extrinsic apoptotic signaling pathway"/>
    <property type="evidence" value="ECO:0000315"/>
    <property type="project" value="MGI"/>
</dbReference>
<dbReference type="GO" id="GO:0046627">
    <property type="term" value="P:negative regulation of insulin receptor signaling pathway"/>
    <property type="evidence" value="ECO:0000316"/>
    <property type="project" value="MGI"/>
</dbReference>
<dbReference type="GO" id="GO:1903940">
    <property type="term" value="P:negative regulation of TORC2 signaling"/>
    <property type="evidence" value="ECO:0000314"/>
    <property type="project" value="UniProtKB"/>
</dbReference>
<dbReference type="GO" id="GO:0018105">
    <property type="term" value="P:peptidyl-serine phosphorylation"/>
    <property type="evidence" value="ECO:0000315"/>
    <property type="project" value="UniProtKB"/>
</dbReference>
<dbReference type="GO" id="GO:0045931">
    <property type="term" value="P:positive regulation of mitotic cell cycle"/>
    <property type="evidence" value="ECO:0007669"/>
    <property type="project" value="Ensembl"/>
</dbReference>
<dbReference type="GO" id="GO:1904263">
    <property type="term" value="P:positive regulation of TORC1 signaling"/>
    <property type="evidence" value="ECO:0007669"/>
    <property type="project" value="Ensembl"/>
</dbReference>
<dbReference type="GO" id="GO:0045948">
    <property type="term" value="P:positive regulation of translational initiation"/>
    <property type="evidence" value="ECO:0007669"/>
    <property type="project" value="Ensembl"/>
</dbReference>
<dbReference type="GO" id="GO:0031929">
    <property type="term" value="P:TOR signaling"/>
    <property type="evidence" value="ECO:0000250"/>
    <property type="project" value="UniProtKB"/>
</dbReference>
<dbReference type="GO" id="GO:0038202">
    <property type="term" value="P:TORC1 signaling"/>
    <property type="evidence" value="ECO:0000266"/>
    <property type="project" value="MGI"/>
</dbReference>
<dbReference type="CDD" id="cd05584">
    <property type="entry name" value="STKc_p70S6K"/>
    <property type="match status" value="1"/>
</dbReference>
<dbReference type="FunFam" id="3.30.200.20:FF:001128">
    <property type="entry name" value="Non-specific serine/threonine protein kinase"/>
    <property type="match status" value="1"/>
</dbReference>
<dbReference type="FunFam" id="1.10.510.10:FF:000092">
    <property type="entry name" value="Ribosomal protein S6 kinase"/>
    <property type="match status" value="1"/>
</dbReference>
<dbReference type="FunFam" id="3.30.200.20:FF:000686">
    <property type="entry name" value="Ribosomal protein S6 kinase"/>
    <property type="match status" value="1"/>
</dbReference>
<dbReference type="Gene3D" id="3.30.200.20">
    <property type="entry name" value="Phosphorylase Kinase, domain 1"/>
    <property type="match status" value="1"/>
</dbReference>
<dbReference type="Gene3D" id="1.10.510.10">
    <property type="entry name" value="Transferase(Phosphotransferase) domain 1"/>
    <property type="match status" value="1"/>
</dbReference>
<dbReference type="InterPro" id="IPR000961">
    <property type="entry name" value="AGC-kinase_C"/>
</dbReference>
<dbReference type="InterPro" id="IPR011009">
    <property type="entry name" value="Kinase-like_dom_sf"/>
</dbReference>
<dbReference type="InterPro" id="IPR017892">
    <property type="entry name" value="Pkinase_C"/>
</dbReference>
<dbReference type="InterPro" id="IPR000719">
    <property type="entry name" value="Prot_kinase_dom"/>
</dbReference>
<dbReference type="InterPro" id="IPR017441">
    <property type="entry name" value="Protein_kinase_ATP_BS"/>
</dbReference>
<dbReference type="InterPro" id="IPR016238">
    <property type="entry name" value="Ribosomal_S6_kinase"/>
</dbReference>
<dbReference type="InterPro" id="IPR008271">
    <property type="entry name" value="Ser/Thr_kinase_AS"/>
</dbReference>
<dbReference type="PANTHER" id="PTHR24351">
    <property type="entry name" value="RIBOSOMAL PROTEIN S6 KINASE"/>
    <property type="match status" value="1"/>
</dbReference>
<dbReference type="Pfam" id="PF00069">
    <property type="entry name" value="Pkinase"/>
    <property type="match status" value="1"/>
</dbReference>
<dbReference type="Pfam" id="PF00433">
    <property type="entry name" value="Pkinase_C"/>
    <property type="match status" value="1"/>
</dbReference>
<dbReference type="PIRSF" id="PIRSF000605">
    <property type="entry name" value="Ribsml_S6_kin_1"/>
    <property type="match status" value="1"/>
</dbReference>
<dbReference type="SMART" id="SM00133">
    <property type="entry name" value="S_TK_X"/>
    <property type="match status" value="1"/>
</dbReference>
<dbReference type="SMART" id="SM00220">
    <property type="entry name" value="S_TKc"/>
    <property type="match status" value="1"/>
</dbReference>
<dbReference type="SUPFAM" id="SSF56112">
    <property type="entry name" value="Protein kinase-like (PK-like)"/>
    <property type="match status" value="1"/>
</dbReference>
<dbReference type="PROSITE" id="PS51285">
    <property type="entry name" value="AGC_KINASE_CTER"/>
    <property type="match status" value="1"/>
</dbReference>
<dbReference type="PROSITE" id="PS00107">
    <property type="entry name" value="PROTEIN_KINASE_ATP"/>
    <property type="match status" value="1"/>
</dbReference>
<dbReference type="PROSITE" id="PS50011">
    <property type="entry name" value="PROTEIN_KINASE_DOM"/>
    <property type="match status" value="1"/>
</dbReference>
<dbReference type="PROSITE" id="PS00108">
    <property type="entry name" value="PROTEIN_KINASE_ST"/>
    <property type="match status" value="1"/>
</dbReference>
<feature type="chain" id="PRO_0000024344" description="Ribosomal protein S6 kinase beta-1">
    <location>
        <begin position="1"/>
        <end position="525"/>
    </location>
</feature>
<feature type="domain" description="Protein kinase" evidence="4">
    <location>
        <begin position="91"/>
        <end position="352"/>
    </location>
</feature>
<feature type="domain" description="AGC-kinase C-terminal" evidence="5">
    <location>
        <begin position="353"/>
        <end position="423"/>
    </location>
</feature>
<feature type="region of interest" description="Disordered" evidence="7">
    <location>
        <begin position="32"/>
        <end position="54"/>
    </location>
</feature>
<feature type="region of interest" description="Disordered" evidence="7">
    <location>
        <begin position="380"/>
        <end position="399"/>
    </location>
</feature>
<feature type="region of interest" description="Autoinhibitory domain">
    <location>
        <begin position="424"/>
        <end position="525"/>
    </location>
</feature>
<feature type="short sequence motif" description="TOS motif">
    <location>
        <begin position="28"/>
        <end position="32"/>
    </location>
</feature>
<feature type="compositionally biased region" description="Acidic residues" evidence="7">
    <location>
        <begin position="32"/>
        <end position="46"/>
    </location>
</feature>
<feature type="compositionally biased region" description="Polar residues" evidence="7">
    <location>
        <begin position="381"/>
        <end position="399"/>
    </location>
</feature>
<feature type="active site" description="Proton acceptor" evidence="4 6">
    <location>
        <position position="218"/>
    </location>
</feature>
<feature type="binding site" evidence="4">
    <location>
        <begin position="97"/>
        <end position="105"/>
    </location>
    <ligand>
        <name>ATP</name>
        <dbReference type="ChEBI" id="CHEBI:30616"/>
    </ligand>
</feature>
<feature type="binding site" evidence="4">
    <location>
        <position position="123"/>
    </location>
    <ligand>
        <name>ATP</name>
        <dbReference type="ChEBI" id="CHEBI:30616"/>
    </ligand>
</feature>
<feature type="modified residue" description="Phosphothreonine; by PDPK1" evidence="2">
    <location>
        <position position="252"/>
    </location>
</feature>
<feature type="modified residue" description="Phosphoserine" evidence="2">
    <location>
        <position position="394"/>
    </location>
</feature>
<feature type="modified residue" description="Phosphothreonine; by MTOR, NEK6 and NEK7" evidence="3">
    <location>
        <position position="412"/>
    </location>
</feature>
<feature type="modified residue" description="Phosphoserine" evidence="3">
    <location>
        <position position="434"/>
    </location>
</feature>
<feature type="modified residue" description="Phosphoserine" evidence="2">
    <location>
        <position position="441"/>
    </location>
</feature>
<feature type="modified residue" description="Phosphothreonine" evidence="2">
    <location>
        <position position="444"/>
    </location>
</feature>
<feature type="modified residue" description="Phosphoserine" evidence="15">
    <location>
        <position position="447"/>
    </location>
</feature>
<feature type="modified residue" description="Phosphoserine" evidence="15">
    <location>
        <position position="452"/>
    </location>
</feature>
<feature type="modified residue" description="N6-acetyllysine" evidence="3">
    <location>
        <position position="516"/>
    </location>
</feature>
<feature type="splice variant" id="VSP_018840" description="In isoform Alpha II." evidence="14">
    <location>
        <begin position="1"/>
        <end position="23"/>
    </location>
</feature>
<feature type="sequence conflict" description="In Ref. 1; BAC28000." evidence="14" ref="1">
    <original>G</original>
    <variation>E</variation>
    <location>
        <position position="60"/>
    </location>
</feature>
<proteinExistence type="evidence at protein level"/>
<evidence type="ECO:0000250" key="1"/>
<evidence type="ECO:0000250" key="2">
    <source>
        <dbReference type="UniProtKB" id="P23443"/>
    </source>
</evidence>
<evidence type="ECO:0000250" key="3">
    <source>
        <dbReference type="UniProtKB" id="P67999"/>
    </source>
</evidence>
<evidence type="ECO:0000255" key="4">
    <source>
        <dbReference type="PROSITE-ProRule" id="PRU00159"/>
    </source>
</evidence>
<evidence type="ECO:0000255" key="5">
    <source>
        <dbReference type="PROSITE-ProRule" id="PRU00618"/>
    </source>
</evidence>
<evidence type="ECO:0000255" key="6">
    <source>
        <dbReference type="PROSITE-ProRule" id="PRU10027"/>
    </source>
</evidence>
<evidence type="ECO:0000256" key="7">
    <source>
        <dbReference type="SAM" id="MobiDB-lite"/>
    </source>
</evidence>
<evidence type="ECO:0000269" key="8">
    <source>
    </source>
</evidence>
<evidence type="ECO:0000269" key="9">
    <source>
    </source>
</evidence>
<evidence type="ECO:0000269" key="10">
    <source>
    </source>
</evidence>
<evidence type="ECO:0000269" key="11">
    <source>
    </source>
</evidence>
<evidence type="ECO:0000269" key="12">
    <source>
    </source>
</evidence>
<evidence type="ECO:0000269" key="13">
    <source>
    </source>
</evidence>
<evidence type="ECO:0000305" key="14"/>
<evidence type="ECO:0007744" key="15">
    <source>
    </source>
</evidence>